<gene>
    <name type="primary">ctpE</name>
    <name type="ordered locus">MT0931</name>
</gene>
<proteinExistence type="inferred from homology"/>
<dbReference type="EC" id="7.2.2.10" evidence="1"/>
<dbReference type="EMBL" id="AE000516">
    <property type="protein sequence ID" value="AAK45178.1"/>
    <property type="molecule type" value="Genomic_DNA"/>
</dbReference>
<dbReference type="PIR" id="D70581">
    <property type="entry name" value="D70581"/>
</dbReference>
<dbReference type="RefSeq" id="WP_003917373.1">
    <property type="nucleotide sequence ID" value="NC_002755.2"/>
</dbReference>
<dbReference type="SMR" id="P9WPT0"/>
<dbReference type="KEGG" id="mtc:MT0931"/>
<dbReference type="PATRIC" id="fig|83331.31.peg.1000"/>
<dbReference type="HOGENOM" id="CLU_002360_5_1_11"/>
<dbReference type="Proteomes" id="UP000001020">
    <property type="component" value="Chromosome"/>
</dbReference>
<dbReference type="GO" id="GO:0005886">
    <property type="term" value="C:plasma membrane"/>
    <property type="evidence" value="ECO:0007669"/>
    <property type="project" value="UniProtKB-SubCell"/>
</dbReference>
<dbReference type="GO" id="GO:0005524">
    <property type="term" value="F:ATP binding"/>
    <property type="evidence" value="ECO:0007669"/>
    <property type="project" value="UniProtKB-KW"/>
</dbReference>
<dbReference type="GO" id="GO:0016887">
    <property type="term" value="F:ATP hydrolysis activity"/>
    <property type="evidence" value="ECO:0007669"/>
    <property type="project" value="InterPro"/>
</dbReference>
<dbReference type="GO" id="GO:0046872">
    <property type="term" value="F:metal ion binding"/>
    <property type="evidence" value="ECO:0007669"/>
    <property type="project" value="UniProtKB-KW"/>
</dbReference>
<dbReference type="GO" id="GO:0005388">
    <property type="term" value="F:P-type calcium transporter activity"/>
    <property type="evidence" value="ECO:0007669"/>
    <property type="project" value="UniProtKB-EC"/>
</dbReference>
<dbReference type="CDD" id="cd02609">
    <property type="entry name" value="P-type_ATPase"/>
    <property type="match status" value="1"/>
</dbReference>
<dbReference type="FunFam" id="2.70.150.10:FF:000075">
    <property type="entry name" value="Metal cation transporter P-type ATPase"/>
    <property type="match status" value="1"/>
</dbReference>
<dbReference type="FunFam" id="3.40.1110.10:FF:000112">
    <property type="entry name" value="Metal cation transporter P-type ATPase"/>
    <property type="match status" value="1"/>
</dbReference>
<dbReference type="Gene3D" id="3.40.1110.10">
    <property type="entry name" value="Calcium-transporting ATPase, cytoplasmic domain N"/>
    <property type="match status" value="1"/>
</dbReference>
<dbReference type="Gene3D" id="2.70.150.10">
    <property type="entry name" value="Calcium-transporting ATPase, cytoplasmic transduction domain A"/>
    <property type="match status" value="1"/>
</dbReference>
<dbReference type="Gene3D" id="1.20.1110.10">
    <property type="entry name" value="Calcium-transporting ATPase, transmembrane domain"/>
    <property type="match status" value="1"/>
</dbReference>
<dbReference type="Gene3D" id="3.40.50.1000">
    <property type="entry name" value="HAD superfamily/HAD-like"/>
    <property type="match status" value="1"/>
</dbReference>
<dbReference type="InterPro" id="IPR023299">
    <property type="entry name" value="ATPase_P-typ_cyto_dom_N"/>
</dbReference>
<dbReference type="InterPro" id="IPR018303">
    <property type="entry name" value="ATPase_P-typ_P_site"/>
</dbReference>
<dbReference type="InterPro" id="IPR023298">
    <property type="entry name" value="ATPase_P-typ_TM_dom_sf"/>
</dbReference>
<dbReference type="InterPro" id="IPR008250">
    <property type="entry name" value="ATPase_P-typ_transduc_dom_A_sf"/>
</dbReference>
<dbReference type="InterPro" id="IPR036412">
    <property type="entry name" value="HAD-like_sf"/>
</dbReference>
<dbReference type="InterPro" id="IPR023214">
    <property type="entry name" value="HAD_sf"/>
</dbReference>
<dbReference type="InterPro" id="IPR001757">
    <property type="entry name" value="P_typ_ATPase"/>
</dbReference>
<dbReference type="InterPro" id="IPR044492">
    <property type="entry name" value="P_typ_ATPase_HD_dom"/>
</dbReference>
<dbReference type="NCBIfam" id="TIGR01494">
    <property type="entry name" value="ATPase_P-type"/>
    <property type="match status" value="2"/>
</dbReference>
<dbReference type="PANTHER" id="PTHR42861">
    <property type="entry name" value="CALCIUM-TRANSPORTING ATPASE"/>
    <property type="match status" value="1"/>
</dbReference>
<dbReference type="Pfam" id="PF00122">
    <property type="entry name" value="E1-E2_ATPase"/>
    <property type="match status" value="1"/>
</dbReference>
<dbReference type="Pfam" id="PF00702">
    <property type="entry name" value="Hydrolase"/>
    <property type="match status" value="1"/>
</dbReference>
<dbReference type="PRINTS" id="PR00119">
    <property type="entry name" value="CATATPASE"/>
</dbReference>
<dbReference type="PRINTS" id="PR00120">
    <property type="entry name" value="HATPASE"/>
</dbReference>
<dbReference type="SFLD" id="SFLDS00003">
    <property type="entry name" value="Haloacid_Dehalogenase"/>
    <property type="match status" value="1"/>
</dbReference>
<dbReference type="SFLD" id="SFLDF00027">
    <property type="entry name" value="p-type_atpase"/>
    <property type="match status" value="1"/>
</dbReference>
<dbReference type="SUPFAM" id="SSF81653">
    <property type="entry name" value="Calcium ATPase, transduction domain A"/>
    <property type="match status" value="1"/>
</dbReference>
<dbReference type="SUPFAM" id="SSF81665">
    <property type="entry name" value="Calcium ATPase, transmembrane domain M"/>
    <property type="match status" value="1"/>
</dbReference>
<dbReference type="SUPFAM" id="SSF56784">
    <property type="entry name" value="HAD-like"/>
    <property type="match status" value="1"/>
</dbReference>
<dbReference type="PROSITE" id="PS00154">
    <property type="entry name" value="ATPASE_E1_E2"/>
    <property type="match status" value="1"/>
</dbReference>
<comment type="function">
    <text evidence="1">P-type ATPase involved in specific uptake of calcium.</text>
</comment>
<comment type="catalytic activity">
    <reaction evidence="1">
        <text>Ca(2+)(in) + ATP + H2O = Ca(2+)(out) + ADP + phosphate + H(+)</text>
        <dbReference type="Rhea" id="RHEA:18105"/>
        <dbReference type="ChEBI" id="CHEBI:15377"/>
        <dbReference type="ChEBI" id="CHEBI:15378"/>
        <dbReference type="ChEBI" id="CHEBI:29108"/>
        <dbReference type="ChEBI" id="CHEBI:30616"/>
        <dbReference type="ChEBI" id="CHEBI:43474"/>
        <dbReference type="ChEBI" id="CHEBI:456216"/>
        <dbReference type="EC" id="7.2.2.10"/>
    </reaction>
</comment>
<comment type="subcellular location">
    <subcellularLocation>
        <location evidence="4">Cell membrane</location>
        <topology evidence="3">Multi-pass membrane protein</topology>
    </subcellularLocation>
</comment>
<comment type="similarity">
    <text evidence="4">Belongs to the cation transport ATPase (P-type) (TC 3.A.3) family.</text>
</comment>
<keyword id="KW-0067">ATP-binding</keyword>
<keyword id="KW-0106">Calcium</keyword>
<keyword id="KW-0109">Calcium transport</keyword>
<keyword id="KW-1003">Cell membrane</keyword>
<keyword id="KW-0406">Ion transport</keyword>
<keyword id="KW-0460">Magnesium</keyword>
<keyword id="KW-0472">Membrane</keyword>
<keyword id="KW-0479">Metal-binding</keyword>
<keyword id="KW-0547">Nucleotide-binding</keyword>
<keyword id="KW-0597">Phosphoprotein</keyword>
<keyword id="KW-1185">Reference proteome</keyword>
<keyword id="KW-1278">Translocase</keyword>
<keyword id="KW-0812">Transmembrane</keyword>
<keyword id="KW-1133">Transmembrane helix</keyword>
<keyword id="KW-0813">Transport</keyword>
<feature type="chain" id="PRO_0000426893" description="Calcium-transporting ATPase CtpE">
    <location>
        <begin position="1"/>
        <end position="797"/>
    </location>
</feature>
<feature type="transmembrane region" description="Helical" evidence="3">
    <location>
        <begin position="55"/>
        <end position="75"/>
    </location>
</feature>
<feature type="transmembrane region" description="Helical" evidence="3">
    <location>
        <begin position="215"/>
        <end position="235"/>
    </location>
</feature>
<feature type="transmembrane region" description="Helical" evidence="3">
    <location>
        <begin position="254"/>
        <end position="274"/>
    </location>
</feature>
<feature type="transmembrane region" description="Helical" evidence="3">
    <location>
        <begin position="601"/>
        <end position="621"/>
    </location>
</feature>
<feature type="transmembrane region" description="Helical" evidence="3">
    <location>
        <begin position="633"/>
        <end position="653"/>
    </location>
</feature>
<feature type="transmembrane region" description="Helical" evidence="3">
    <location>
        <begin position="667"/>
        <end position="687"/>
    </location>
</feature>
<feature type="transmembrane region" description="Helical" evidence="3">
    <location>
        <begin position="703"/>
        <end position="723"/>
    </location>
</feature>
<feature type="transmembrane region" description="Helical" evidence="3">
    <location>
        <begin position="729"/>
        <end position="749"/>
    </location>
</feature>
<feature type="transmembrane region" description="Helical" evidence="3">
    <location>
        <begin position="764"/>
        <end position="784"/>
    </location>
</feature>
<feature type="active site" description="4-aspartylphosphate intermediate" evidence="2">
    <location>
        <position position="301"/>
    </location>
</feature>
<feature type="binding site" evidence="2">
    <location>
        <position position="301"/>
    </location>
    <ligand>
        <name>Mg(2+)</name>
        <dbReference type="ChEBI" id="CHEBI:18420"/>
    </ligand>
</feature>
<feature type="binding site" evidence="2">
    <location>
        <position position="303"/>
    </location>
    <ligand>
        <name>Mg(2+)</name>
        <dbReference type="ChEBI" id="CHEBI:18420"/>
    </ligand>
</feature>
<feature type="binding site" evidence="2">
    <location>
        <position position="536"/>
    </location>
    <ligand>
        <name>Mg(2+)</name>
        <dbReference type="ChEBI" id="CHEBI:18420"/>
    </ligand>
</feature>
<protein>
    <recommendedName>
        <fullName evidence="1">Calcium-transporting ATPase CtpE</fullName>
        <ecNumber evidence="1">7.2.2.10</ecNumber>
    </recommendedName>
</protein>
<evidence type="ECO:0000250" key="1">
    <source>
        <dbReference type="UniProtKB" id="A0R3Y2"/>
    </source>
</evidence>
<evidence type="ECO:0000250" key="2">
    <source>
        <dbReference type="UniProtKB" id="Q5ZWR1"/>
    </source>
</evidence>
<evidence type="ECO:0000255" key="3"/>
<evidence type="ECO:0000305" key="4"/>
<organism>
    <name type="scientific">Mycobacterium tuberculosis (strain CDC 1551 / Oshkosh)</name>
    <dbReference type="NCBI Taxonomy" id="83331"/>
    <lineage>
        <taxon>Bacteria</taxon>
        <taxon>Bacillati</taxon>
        <taxon>Actinomycetota</taxon>
        <taxon>Actinomycetes</taxon>
        <taxon>Mycobacteriales</taxon>
        <taxon>Mycobacteriaceae</taxon>
        <taxon>Mycobacterium</taxon>
        <taxon>Mycobacterium tuberculosis complex</taxon>
    </lineage>
</organism>
<reference key="1">
    <citation type="journal article" date="2002" name="J. Bacteriol.">
        <title>Whole-genome comparison of Mycobacterium tuberculosis clinical and laboratory strains.</title>
        <authorList>
            <person name="Fleischmann R.D."/>
            <person name="Alland D."/>
            <person name="Eisen J.A."/>
            <person name="Carpenter L."/>
            <person name="White O."/>
            <person name="Peterson J.D."/>
            <person name="DeBoy R.T."/>
            <person name="Dodson R.J."/>
            <person name="Gwinn M.L."/>
            <person name="Haft D.H."/>
            <person name="Hickey E.K."/>
            <person name="Kolonay J.F."/>
            <person name="Nelson W.C."/>
            <person name="Umayam L.A."/>
            <person name="Ermolaeva M.D."/>
            <person name="Salzberg S.L."/>
            <person name="Delcher A."/>
            <person name="Utterback T.R."/>
            <person name="Weidman J.F."/>
            <person name="Khouri H.M."/>
            <person name="Gill J."/>
            <person name="Mikula A."/>
            <person name="Bishai W."/>
            <person name="Jacobs W.R. Jr."/>
            <person name="Venter J.C."/>
            <person name="Fraser C.M."/>
        </authorList>
    </citation>
    <scope>NUCLEOTIDE SEQUENCE [LARGE SCALE GENOMIC DNA]</scope>
    <source>
        <strain>CDC 1551 / Oshkosh</strain>
    </source>
</reference>
<name>CTPE_MYCTO</name>
<accession>P9WPT0</accession>
<accession>L0T595</accession>
<accession>O08365</accession>
<accession>P0A504</accession>
<sequence>MTRSASATAGLTDAEVAQRVAEGKSNDIPERVTRTVGQIVRANVFTRINAILGVLLLIVLATGSLINGMFGLLIIANSVIGMVQEIRAKQTLDKLAIIGQAKPLVRRQSGTRTRSTNEVVLDDIIELGPGDQVVVDGEVVEEENLEIDESLLTGEADPIAKDAGDTVMSGSFVVSGAGAYRATKVGSEAYAAKLAAEASKFTLVKSELRNGINRILQFITYLLVPAGLLTIYTQLFTTHVGWRESVLRMVGALVPMVPEGLVLMTSIAFAVGVVRLGQRQCLVQELPAIEGLARVDVVCADKTGTLTESGMRVCEVEELDGAGRQESVADVLAALAAADARPNASMQAIAEAFHSPPGWVVAANAPFKSATKWSGVSFRDHGNWVIGAPDVLLDPASVAARQAERIGAQGLRVLLLAAGSVAVDHAQAPGQVTPVALVVLEQKVRPDARETLDYFAVQNVSVKVISGDNAVSVGAVADRLGLHGEAMDARALPTGREELADTLDSYTSFGRVRPDQKRAIVHALQSHGHTVAMTGDGVNDVLALKDADIGVAMGSGSPASRAVAQIVLLNNRFATLPHVVGEGRRVIGNIERVANLFLTKTVYSVLLALLVGIECLIAIPLRRDPLLFPFQPIHVTIAAWFTIGIPAFILSLAPNNERAYPGFVRRVMTSAVPFGLVIGVATFVTYLAAYQGRYASWQEQEQASTAALITLLMTALWVLAVIARPYQWWRLALVLPSGLAYVVIFSLPLAREKFLLDASNLATTSIALAVGVVGAATIEAMWWIRSRMLGVKPRVWR</sequence>